<accession>P95629</accession>
<name>PUTA_RHIML</name>
<dbReference type="EC" id="1.5.5.2"/>
<dbReference type="EC" id="1.2.1.88"/>
<dbReference type="EMBL" id="Y08500">
    <property type="protein sequence ID" value="CAA69727.1"/>
    <property type="molecule type" value="Genomic_DNA"/>
</dbReference>
<dbReference type="PIR" id="T43218">
    <property type="entry name" value="T43218"/>
</dbReference>
<dbReference type="SMR" id="P95629"/>
<dbReference type="STRING" id="382.DU99_02490"/>
<dbReference type="UniPathway" id="UPA00261">
    <property type="reaction ID" value="UER00373"/>
</dbReference>
<dbReference type="UniPathway" id="UPA00261">
    <property type="reaction ID" value="UER00374"/>
</dbReference>
<dbReference type="GO" id="GO:0009898">
    <property type="term" value="C:cytoplasmic side of plasma membrane"/>
    <property type="evidence" value="ECO:0007669"/>
    <property type="project" value="TreeGrafter"/>
</dbReference>
<dbReference type="GO" id="GO:0003842">
    <property type="term" value="F:1-pyrroline-5-carboxylate dehydrogenase activity"/>
    <property type="evidence" value="ECO:0007669"/>
    <property type="project" value="UniProtKB-EC"/>
</dbReference>
<dbReference type="GO" id="GO:0003677">
    <property type="term" value="F:DNA binding"/>
    <property type="evidence" value="ECO:0007669"/>
    <property type="project" value="UniProtKB-KW"/>
</dbReference>
<dbReference type="GO" id="GO:0003700">
    <property type="term" value="F:DNA-binding transcription factor activity"/>
    <property type="evidence" value="ECO:0007669"/>
    <property type="project" value="InterPro"/>
</dbReference>
<dbReference type="GO" id="GO:0004657">
    <property type="term" value="F:proline dehydrogenase activity"/>
    <property type="evidence" value="ECO:0007669"/>
    <property type="project" value="UniProtKB-EC"/>
</dbReference>
<dbReference type="GO" id="GO:0006561">
    <property type="term" value="P:proline biosynthetic process"/>
    <property type="evidence" value="ECO:0007669"/>
    <property type="project" value="InterPro"/>
</dbReference>
<dbReference type="GO" id="GO:0010133">
    <property type="term" value="P:proline catabolic process to glutamate"/>
    <property type="evidence" value="ECO:0007669"/>
    <property type="project" value="UniProtKB-UniPathway"/>
</dbReference>
<dbReference type="FunFam" id="3.40.309.10:FF:000005">
    <property type="entry name" value="1-pyrroline-5-carboxylate dehydrogenase 1"/>
    <property type="match status" value="1"/>
</dbReference>
<dbReference type="FunFam" id="3.20.20.220:FF:000004">
    <property type="entry name" value="Bifunctional protein PutA"/>
    <property type="match status" value="1"/>
</dbReference>
<dbReference type="Gene3D" id="3.20.20.220">
    <property type="match status" value="1"/>
</dbReference>
<dbReference type="Gene3D" id="3.40.605.10">
    <property type="entry name" value="Aldehyde Dehydrogenase, Chain A, domain 1"/>
    <property type="match status" value="1"/>
</dbReference>
<dbReference type="Gene3D" id="3.40.309.10">
    <property type="entry name" value="Aldehyde Dehydrogenase, Chain A, domain 2"/>
    <property type="match status" value="1"/>
</dbReference>
<dbReference type="Gene3D" id="1.20.5.550">
    <property type="entry name" value="Single Helix bin"/>
    <property type="match status" value="1"/>
</dbReference>
<dbReference type="Gene3D" id="1.20.5.460">
    <property type="entry name" value="Single helix bin"/>
    <property type="match status" value="1"/>
</dbReference>
<dbReference type="InterPro" id="IPR016161">
    <property type="entry name" value="Ald_DH/histidinol_DH"/>
</dbReference>
<dbReference type="InterPro" id="IPR016163">
    <property type="entry name" value="Ald_DH_C"/>
</dbReference>
<dbReference type="InterPro" id="IPR016160">
    <property type="entry name" value="Ald_DH_CS_CYS"/>
</dbReference>
<dbReference type="InterPro" id="IPR016162">
    <property type="entry name" value="Ald_DH_N"/>
</dbReference>
<dbReference type="InterPro" id="IPR015590">
    <property type="entry name" value="Aldehyde_DH_dom"/>
</dbReference>
<dbReference type="InterPro" id="IPR025703">
    <property type="entry name" value="Bifunct_PutA"/>
</dbReference>
<dbReference type="InterPro" id="IPR029041">
    <property type="entry name" value="FAD-linked_oxidoreductase-like"/>
</dbReference>
<dbReference type="InterPro" id="IPR041349">
    <property type="entry name" value="PRODH"/>
</dbReference>
<dbReference type="InterPro" id="IPR024090">
    <property type="entry name" value="PRODH_PutA_dom_I"/>
</dbReference>
<dbReference type="InterPro" id="IPR024089">
    <property type="entry name" value="PRODH_PutA_dom_I/II"/>
</dbReference>
<dbReference type="InterPro" id="IPR024082">
    <property type="entry name" value="PRODH_PutA_dom_II"/>
</dbReference>
<dbReference type="InterPro" id="IPR002872">
    <property type="entry name" value="Proline_DH_dom"/>
</dbReference>
<dbReference type="InterPro" id="IPR050485">
    <property type="entry name" value="Proline_metab_enzyme"/>
</dbReference>
<dbReference type="InterPro" id="IPR005933">
    <property type="entry name" value="PutA_C"/>
</dbReference>
<dbReference type="NCBIfam" id="TIGR01238">
    <property type="entry name" value="D1pyr5carbox3"/>
    <property type="match status" value="1"/>
</dbReference>
<dbReference type="NCBIfam" id="NF008869">
    <property type="entry name" value="PRK11904.1"/>
    <property type="match status" value="1"/>
</dbReference>
<dbReference type="PANTHER" id="PTHR42862">
    <property type="entry name" value="DELTA-1-PYRROLINE-5-CARBOXYLATE DEHYDROGENASE 1, ISOFORM A-RELATED"/>
    <property type="match status" value="1"/>
</dbReference>
<dbReference type="PANTHER" id="PTHR42862:SF1">
    <property type="entry name" value="DELTA-1-PYRROLINE-5-CARBOXYLATE DEHYDROGENASE 2, ISOFORM A-RELATED"/>
    <property type="match status" value="1"/>
</dbReference>
<dbReference type="Pfam" id="PF00171">
    <property type="entry name" value="Aldedh"/>
    <property type="match status" value="1"/>
</dbReference>
<dbReference type="Pfam" id="PF01619">
    <property type="entry name" value="Pro_dh"/>
    <property type="match status" value="1"/>
</dbReference>
<dbReference type="Pfam" id="PF14850">
    <property type="entry name" value="Pro_dh-DNA_bdg"/>
    <property type="match status" value="1"/>
</dbReference>
<dbReference type="Pfam" id="PF18327">
    <property type="entry name" value="PRODH"/>
    <property type="match status" value="1"/>
</dbReference>
<dbReference type="PIRSF" id="PIRSF000197">
    <property type="entry name" value="Bifunct_PutA"/>
    <property type="match status" value="1"/>
</dbReference>
<dbReference type="SUPFAM" id="SSF53720">
    <property type="entry name" value="ALDH-like"/>
    <property type="match status" value="1"/>
</dbReference>
<dbReference type="SUPFAM" id="SSF51730">
    <property type="entry name" value="FAD-linked oxidoreductase"/>
    <property type="match status" value="1"/>
</dbReference>
<dbReference type="SUPFAM" id="SSF81935">
    <property type="entry name" value="N-terminal domain of bifunctional PutA protein"/>
    <property type="match status" value="1"/>
</dbReference>
<dbReference type="PROSITE" id="PS00070">
    <property type="entry name" value="ALDEHYDE_DEHYDR_CYS"/>
    <property type="match status" value="1"/>
</dbReference>
<gene>
    <name type="primary">putA</name>
</gene>
<comment type="function">
    <text>Oxidizes proline to glutamate for use as a carbon and nitrogen source, and also functions as a transcriptional repressor of its own gene.</text>
</comment>
<comment type="catalytic activity">
    <reaction>
        <text>L-proline + a quinone = (S)-1-pyrroline-5-carboxylate + a quinol + H(+)</text>
        <dbReference type="Rhea" id="RHEA:23784"/>
        <dbReference type="ChEBI" id="CHEBI:15378"/>
        <dbReference type="ChEBI" id="CHEBI:17388"/>
        <dbReference type="ChEBI" id="CHEBI:24646"/>
        <dbReference type="ChEBI" id="CHEBI:60039"/>
        <dbReference type="ChEBI" id="CHEBI:132124"/>
        <dbReference type="EC" id="1.5.5.2"/>
    </reaction>
</comment>
<comment type="catalytic activity">
    <reaction>
        <text>L-glutamate 5-semialdehyde + NAD(+) + H2O = L-glutamate + NADH + 2 H(+)</text>
        <dbReference type="Rhea" id="RHEA:30235"/>
        <dbReference type="ChEBI" id="CHEBI:15377"/>
        <dbReference type="ChEBI" id="CHEBI:15378"/>
        <dbReference type="ChEBI" id="CHEBI:29985"/>
        <dbReference type="ChEBI" id="CHEBI:57540"/>
        <dbReference type="ChEBI" id="CHEBI:57945"/>
        <dbReference type="ChEBI" id="CHEBI:58066"/>
        <dbReference type="EC" id="1.2.1.88"/>
    </reaction>
</comment>
<comment type="cofactor">
    <cofactor>
        <name>FAD</name>
        <dbReference type="ChEBI" id="CHEBI:57692"/>
    </cofactor>
</comment>
<comment type="pathway">
    <text>Amino-acid degradation; L-proline degradation into L-glutamate; L-glutamate from L-proline: step 1/2.</text>
</comment>
<comment type="pathway">
    <text>Amino-acid degradation; L-proline degradation into L-glutamate; L-glutamate from L-proline: step 2/2.</text>
</comment>
<comment type="similarity">
    <text evidence="3">In the N-terminal section; belongs to the proline dehydrogenase family.</text>
</comment>
<comment type="similarity">
    <text evidence="3">In the C-terminal section; belongs to the aldehyde dehydrogenase family.</text>
</comment>
<protein>
    <recommendedName>
        <fullName>Bifunctional protein PutA</fullName>
    </recommendedName>
    <domain>
        <recommendedName>
            <fullName>Proline dehydrogenase</fullName>
            <ecNumber>1.5.5.2</ecNumber>
        </recommendedName>
        <alternativeName>
            <fullName>Proline oxidase</fullName>
        </alternativeName>
    </domain>
    <domain>
        <recommendedName>
            <fullName>Delta-1-pyrroline-5-carboxylate dehydrogenase</fullName>
            <shortName>P5C dehydrogenase</shortName>
            <ecNumber>1.2.1.88</ecNumber>
        </recommendedName>
        <alternativeName>
            <fullName>L-glutamate gamma-semialdehyde dehydrogenase</fullName>
        </alternativeName>
    </domain>
</protein>
<reference key="1">
    <citation type="journal article" date="1997" name="Mol. Microbiol.">
        <title>The Rhizobium meliloti putA gene: its role in the establishment of the symbiotic interaction with alfalfa.</title>
        <authorList>
            <person name="Jimenez-Zurdo J.I."/>
            <person name="Garcia-Rodriguez F.M."/>
            <person name="Toro N."/>
        </authorList>
    </citation>
    <scope>NUCLEOTIDE SEQUENCE [GENOMIC DNA]</scope>
    <source>
        <strain>GR4</strain>
    </source>
</reference>
<reference key="2">
    <citation type="journal article" date="2000" name="J. Bacteriol.">
        <title>Sinorhizobium meliloti putA gene regulation: a new model within the family rhizobiaceae.</title>
        <authorList>
            <person name="Soto M.J."/>
            <person name="Jimenez-Zurdo J.I."/>
            <person name="van Dillewijn P."/>
            <person name="Toro N."/>
        </authorList>
    </citation>
    <scope>AUTOREGULATORY ROLE</scope>
</reference>
<proteinExistence type="inferred from homology"/>
<evidence type="ECO:0000255" key="1">
    <source>
        <dbReference type="PROSITE-ProRule" id="PRU10008"/>
    </source>
</evidence>
<evidence type="ECO:0000256" key="2">
    <source>
        <dbReference type="SAM" id="MobiDB-lite"/>
    </source>
</evidence>
<evidence type="ECO:0000305" key="3"/>
<sequence length="1224" mass="131191">MSPNPLQKPAIDAAPAPFADFAPPVRPQSTLRRAITAAYRRPETECLPPLVEAATQSKEIRDAAASTARKLIEALRGKHSGSGVEGLVQEYSLSSQEGVALMCLAERPVRIPDTATRDALIRDKIADGNWKSHLGRSRSLFVNAATWGLVVTGKLTSTVNDRTLAARVTRLISRCGEPVIRRGVDMAMRMMGEQFVTGETIEALKRSKELEEKGFSYSYDMLRERPTAADAERYYRDYESAIHATAKPRGRGIYEGPGISIKLSALHPRYRQAARVMGELLPRVKALALLAKNYDIGLNIDAEEADRLELSLDLLEVLCLDGDLSGWNGMGFVVQAYGKRCPFVLDFIIDLARRSGRRIMVRLVKGAYWDAEIKRAQLDGLADFPVFTRKIHTDVSYMPRTQAACRDRCGVPQFATHNAQTLAAIYHMAGKDFHVGKYEFQCLHGMGEPLYEEVVGRGKLDRPCRIYAPVGTHETLLAYLVRRLLENGANSSFVHRINDPKVSIDELIADPVEVVRAMPVVGAKHDRIALPAVLFGDARTNSAGFDLSNEETLASLTEALRESAAMKWTALPQFATGPAAGETRTVLNPGDHRDVVGSVTETRKRTHGAPCACRRRGAGLGGRLAERAACLDRAAELMQARMPTLLGLIIREAGKSALNAIAEVREAIDFLRYYAEQTRRTLGPATPLGPIVCISPWNFPLAIFTGQIAAALVAGNPVLAKPAEETPLIAAEGVRILREAGIPASALQLLPGDGRVGAALVAGRDAGVMFTGSTEVARLIQAQLADRLSPAGRPVPLIAETGGQNAMIVDSSALAGQVVGDVITSAFDSAGQRCSALRVLCLQEDVAGPHPDDAEGRAARHCISAAPIVFSVDVGPVITSEAKDNIEKHIERMRGLGRKVEQIGLASETGVGTFVPPTIIELEKLSDLQREVFGPVLHVIRYRRDDLDRLVDDVNATGYGLTFGLHTRLDETIAHVTSRIKAGNLYINRNIIGAVVGVQPFGGRGLSGTGPKAGGPLYLGRLVTTAPVPPQHSSVHTDPVLLDFAKWLDGKGARAEVEAARNAGSSSALGLDLELPGPVGERNLYTLHARGRILLVPATESGLYHQLAAALATGNSVAIDAASGLQASLKNLPQTVGLRVSWSKDWAADGPFAGALVEGDAERIRAVNKAIAALPGPLLLVQAASSGEIARNPDAYCLNWLVEEVSASINTAAAGGNASLMAIG</sequence>
<keyword id="KW-0238">DNA-binding</keyword>
<keyword id="KW-0274">FAD</keyword>
<keyword id="KW-0285">Flavoprotein</keyword>
<keyword id="KW-0511">Multifunctional enzyme</keyword>
<keyword id="KW-0520">NAD</keyword>
<keyword id="KW-0560">Oxidoreductase</keyword>
<keyword id="KW-0642">Proline metabolism</keyword>
<keyword id="KW-0678">Repressor</keyword>
<keyword id="KW-0804">Transcription</keyword>
<keyword id="KW-0805">Transcription regulation</keyword>
<feature type="chain" id="PRO_0000056527" description="Bifunctional protein PutA">
    <location>
        <begin position="1"/>
        <end position="1224"/>
    </location>
</feature>
<feature type="region of interest" description="Disordered" evidence="2">
    <location>
        <begin position="1"/>
        <end position="25"/>
    </location>
</feature>
<feature type="region of interest" description="Proline dehydrogenase">
    <location>
        <begin position="164"/>
        <end position="501"/>
    </location>
</feature>
<feature type="region of interest" description="Aldehyde dehydrogenase">
    <location>
        <begin position="576"/>
        <end position="1032"/>
    </location>
</feature>
<feature type="compositionally biased region" description="Low complexity" evidence="2">
    <location>
        <begin position="9"/>
        <end position="23"/>
    </location>
</feature>
<feature type="active site" evidence="1">
    <location>
        <position position="800"/>
    </location>
</feature>
<feature type="active site" evidence="1">
    <location>
        <position position="834"/>
    </location>
</feature>
<organism>
    <name type="scientific">Rhizobium meliloti</name>
    <name type="common">Ensifer meliloti</name>
    <name type="synonym">Sinorhizobium meliloti</name>
    <dbReference type="NCBI Taxonomy" id="382"/>
    <lineage>
        <taxon>Bacteria</taxon>
        <taxon>Pseudomonadati</taxon>
        <taxon>Pseudomonadota</taxon>
        <taxon>Alphaproteobacteria</taxon>
        <taxon>Hyphomicrobiales</taxon>
        <taxon>Rhizobiaceae</taxon>
        <taxon>Sinorhizobium/Ensifer group</taxon>
        <taxon>Sinorhizobium</taxon>
    </lineage>
</organism>